<sequence length="12" mass="1190">GSSSGLISMPRV</sequence>
<organism>
    <name type="scientific">Periplaneta brunnea</name>
    <name type="common">Brown cockroach</name>
    <dbReference type="NCBI Taxonomy" id="36976"/>
    <lineage>
        <taxon>Eukaryota</taxon>
        <taxon>Metazoa</taxon>
        <taxon>Ecdysozoa</taxon>
        <taxon>Arthropoda</taxon>
        <taxon>Hexapoda</taxon>
        <taxon>Insecta</taxon>
        <taxon>Pterygota</taxon>
        <taxon>Neoptera</taxon>
        <taxon>Polyneoptera</taxon>
        <taxon>Dictyoptera</taxon>
        <taxon>Blattodea</taxon>
        <taxon>Blattoidea</taxon>
        <taxon>Blattidae</taxon>
        <taxon>Blattinae</taxon>
        <taxon>Periplaneta</taxon>
    </lineage>
</organism>
<evidence type="ECO:0000255" key="1"/>
<evidence type="ECO:0000269" key="2">
    <source>
    </source>
</evidence>
<evidence type="ECO:0000269" key="3">
    <source>
    </source>
</evidence>
<evidence type="ECO:0000305" key="4"/>
<proteinExistence type="evidence at protein level"/>
<keyword id="KW-0027">Amidation</keyword>
<keyword id="KW-0903">Direct protein sequencing</keyword>
<keyword id="KW-0527">Neuropeptide</keyword>
<keyword id="KW-0964">Secreted</keyword>
<protein>
    <recommendedName>
        <fullName>Periviscerokinin-2.1</fullName>
    </recommendedName>
    <alternativeName>
        <fullName>Pea-PVK-2-like peptide</fullName>
    </alternativeName>
    <alternativeName>
        <fullName>Periviscerokinin-3</fullName>
        <shortName>PerBr-PVK-3</shortName>
    </alternativeName>
</protein>
<accession>P84435</accession>
<reference evidence="4" key="1">
    <citation type="journal article" date="2005" name="Peptides">
        <title>Peptidomics of neurohemal organs from species of the cockroach family Blattidae: how do neuropeptides of closely related species differ?</title>
        <authorList>
            <person name="Predel R."/>
            <person name="Gaede G."/>
        </authorList>
    </citation>
    <scope>PROTEIN SEQUENCE</scope>
    <scope>MASS SPECTROMETRY</scope>
    <scope>AMIDATION AT VAL-12</scope>
    <source>
        <tissue evidence="2">Abdominal perisympathetic organs</tissue>
    </source>
</reference>
<reference key="2">
    <citation type="journal article" date="2009" name="BMC Evol. Biol.">
        <title>A proteomic approach for studying insect phylogeny: CAPA peptides of ancient insect taxa (Dictyoptera, Blattoptera) as a test case.</title>
        <authorList>
            <person name="Roth S."/>
            <person name="Fromm B."/>
            <person name="Gaede G."/>
            <person name="Predel R."/>
        </authorList>
    </citation>
    <scope>PROTEIN SEQUENCE</scope>
    <scope>AMIDATION AT VAL-12</scope>
    <source>
        <tissue>Abdominal perisympathetic organs</tissue>
    </source>
</reference>
<dbReference type="GO" id="GO:0005576">
    <property type="term" value="C:extracellular region"/>
    <property type="evidence" value="ECO:0007669"/>
    <property type="project" value="UniProtKB-SubCell"/>
</dbReference>
<dbReference type="GO" id="GO:0007218">
    <property type="term" value="P:neuropeptide signaling pathway"/>
    <property type="evidence" value="ECO:0007669"/>
    <property type="project" value="UniProtKB-KW"/>
</dbReference>
<dbReference type="InterPro" id="IPR013231">
    <property type="entry name" value="Periviscerokinin"/>
</dbReference>
<dbReference type="Pfam" id="PF08259">
    <property type="entry name" value="Periviscerokin"/>
    <property type="match status" value="1"/>
</dbReference>
<name>PVK21_PERBR</name>
<comment type="function">
    <text evidence="4">Mediates visceral muscle contractile activity (myotropic activity).</text>
</comment>
<comment type="subcellular location">
    <subcellularLocation>
        <location evidence="4">Secreted</location>
    </subcellularLocation>
</comment>
<comment type="mass spectrometry" mass="1189.6" method="MALDI" evidence="2"/>
<comment type="similarity">
    <text evidence="1">Belongs to the periviscerokinin family.</text>
</comment>
<feature type="peptide" id="PRO_0000044272" description="Periviscerokinin-2.1">
    <location>
        <begin position="1"/>
        <end position="12"/>
    </location>
</feature>
<feature type="modified residue" description="Valine amide" evidence="2 3">
    <location>
        <position position="12"/>
    </location>
</feature>